<gene>
    <name evidence="1" type="primary">rps14</name>
</gene>
<accession>Q4G393</accession>
<protein>
    <recommendedName>
        <fullName evidence="1">Small ribosomal subunit protein uS14c</fullName>
    </recommendedName>
    <alternativeName>
        <fullName evidence="2">30S ribosomal protein S14, chloroplastic</fullName>
    </alternativeName>
</protein>
<feature type="chain" id="PRO_0000276710" description="Small ribosomal subunit protein uS14c">
    <location>
        <begin position="1"/>
        <end position="100"/>
    </location>
</feature>
<keyword id="KW-0150">Chloroplast</keyword>
<keyword id="KW-0934">Plastid</keyword>
<keyword id="KW-0687">Ribonucleoprotein</keyword>
<keyword id="KW-0689">Ribosomal protein</keyword>
<keyword id="KW-0694">RNA-binding</keyword>
<keyword id="KW-0699">rRNA-binding</keyword>
<organism>
    <name type="scientific">Emiliania huxleyi</name>
    <name type="common">Coccolithophore</name>
    <name type="synonym">Pontosphaera huxleyi</name>
    <dbReference type="NCBI Taxonomy" id="2903"/>
    <lineage>
        <taxon>Eukaryota</taxon>
        <taxon>Haptista</taxon>
        <taxon>Haptophyta</taxon>
        <taxon>Prymnesiophyceae</taxon>
        <taxon>Isochrysidales</taxon>
        <taxon>Noelaerhabdaceae</taxon>
        <taxon>Emiliania</taxon>
    </lineage>
</organism>
<dbReference type="EMBL" id="AY741371">
    <property type="protein sequence ID" value="AAX13873.1"/>
    <property type="molecule type" value="Genomic_DNA"/>
</dbReference>
<dbReference type="RefSeq" id="YP_277374.1">
    <property type="nucleotide sequence ID" value="NC_007288.1"/>
</dbReference>
<dbReference type="SMR" id="Q4G393"/>
<dbReference type="STRING" id="2903.Q4G393"/>
<dbReference type="GeneID" id="3562453"/>
<dbReference type="GO" id="GO:0009507">
    <property type="term" value="C:chloroplast"/>
    <property type="evidence" value="ECO:0007669"/>
    <property type="project" value="UniProtKB-SubCell"/>
</dbReference>
<dbReference type="GO" id="GO:0015935">
    <property type="term" value="C:small ribosomal subunit"/>
    <property type="evidence" value="ECO:0007669"/>
    <property type="project" value="TreeGrafter"/>
</dbReference>
<dbReference type="GO" id="GO:0019843">
    <property type="term" value="F:rRNA binding"/>
    <property type="evidence" value="ECO:0007669"/>
    <property type="project" value="UniProtKB-UniRule"/>
</dbReference>
<dbReference type="GO" id="GO:0003735">
    <property type="term" value="F:structural constituent of ribosome"/>
    <property type="evidence" value="ECO:0007669"/>
    <property type="project" value="InterPro"/>
</dbReference>
<dbReference type="GO" id="GO:0006412">
    <property type="term" value="P:translation"/>
    <property type="evidence" value="ECO:0007669"/>
    <property type="project" value="UniProtKB-UniRule"/>
</dbReference>
<dbReference type="FunFam" id="1.10.287.1480:FF:000001">
    <property type="entry name" value="30S ribosomal protein S14"/>
    <property type="match status" value="1"/>
</dbReference>
<dbReference type="Gene3D" id="1.10.287.1480">
    <property type="match status" value="1"/>
</dbReference>
<dbReference type="HAMAP" id="MF_00537">
    <property type="entry name" value="Ribosomal_uS14_1"/>
    <property type="match status" value="1"/>
</dbReference>
<dbReference type="InterPro" id="IPR001209">
    <property type="entry name" value="Ribosomal_uS14"/>
</dbReference>
<dbReference type="InterPro" id="IPR023036">
    <property type="entry name" value="Ribosomal_uS14_bac/plastid"/>
</dbReference>
<dbReference type="InterPro" id="IPR018271">
    <property type="entry name" value="Ribosomal_uS14_CS"/>
</dbReference>
<dbReference type="NCBIfam" id="NF006477">
    <property type="entry name" value="PRK08881.1"/>
    <property type="match status" value="1"/>
</dbReference>
<dbReference type="PANTHER" id="PTHR19836">
    <property type="entry name" value="30S RIBOSOMAL PROTEIN S14"/>
    <property type="match status" value="1"/>
</dbReference>
<dbReference type="PANTHER" id="PTHR19836:SF19">
    <property type="entry name" value="SMALL RIBOSOMAL SUBUNIT PROTEIN US14M"/>
    <property type="match status" value="1"/>
</dbReference>
<dbReference type="Pfam" id="PF00253">
    <property type="entry name" value="Ribosomal_S14"/>
    <property type="match status" value="1"/>
</dbReference>
<dbReference type="SUPFAM" id="SSF57716">
    <property type="entry name" value="Glucocorticoid receptor-like (DNA-binding domain)"/>
    <property type="match status" value="1"/>
</dbReference>
<dbReference type="PROSITE" id="PS00527">
    <property type="entry name" value="RIBOSOMAL_S14"/>
    <property type="match status" value="1"/>
</dbReference>
<geneLocation type="chloroplast"/>
<reference key="1">
    <citation type="journal article" date="2005" name="DNA Res.">
        <title>The complete plastid genome sequence of the haptophyte Emiliania huxleyi: a comparison to other plastid genomes.</title>
        <authorList>
            <person name="Sanchez-Puerta M.V."/>
            <person name="Bachvaroff T.R."/>
            <person name="Delwiche C.F."/>
        </authorList>
    </citation>
    <scope>NUCLEOTIDE SEQUENCE [LARGE SCALE GENOMIC DNA]</scope>
    <source>
        <strain>CCMP373 / CSIRO-CS-57 / BT6</strain>
    </source>
</reference>
<comment type="function">
    <text evidence="1">Binds 16S rRNA, required for the assembly of 30S particles.</text>
</comment>
<comment type="subunit">
    <text evidence="1">Part of the 30S ribosomal subunit.</text>
</comment>
<comment type="subcellular location">
    <subcellularLocation>
        <location>Plastid</location>
        <location>Chloroplast</location>
    </subcellularLocation>
</comment>
<comment type="similarity">
    <text evidence="1">Belongs to the universal ribosomal protein uS14 family.</text>
</comment>
<proteinExistence type="inferred from homology"/>
<name>RR14_EMIHU</name>
<evidence type="ECO:0000255" key="1">
    <source>
        <dbReference type="HAMAP-Rule" id="MF_00537"/>
    </source>
</evidence>
<evidence type="ECO:0000305" key="2"/>
<sequence>MAKQSMIQRELKRERLISKYSAKRQLLKEELKTVSSYNDKLAIYKKLEKLPRNSSPNRHRNRCWATGRSRAYYRDFGLSRHVLREMAHEGLIPGLTKSSW</sequence>